<gene>
    <name evidence="2" type="primary">trmB</name>
    <name type="ordered locus">UUR10_0265</name>
</gene>
<comment type="function">
    <text evidence="2">Catalyzes the formation of N(7)-methylguanine at position 46 (m7G46) in tRNA.</text>
</comment>
<comment type="catalytic activity">
    <reaction evidence="2">
        <text>guanosine(46) in tRNA + S-adenosyl-L-methionine = N(7)-methylguanosine(46) in tRNA + S-adenosyl-L-homocysteine</text>
        <dbReference type="Rhea" id="RHEA:42708"/>
        <dbReference type="Rhea" id="RHEA-COMP:10188"/>
        <dbReference type="Rhea" id="RHEA-COMP:10189"/>
        <dbReference type="ChEBI" id="CHEBI:57856"/>
        <dbReference type="ChEBI" id="CHEBI:59789"/>
        <dbReference type="ChEBI" id="CHEBI:74269"/>
        <dbReference type="ChEBI" id="CHEBI:74480"/>
        <dbReference type="EC" id="2.1.1.33"/>
    </reaction>
</comment>
<comment type="pathway">
    <text evidence="2">tRNA modification; N(7)-methylguanine-tRNA biosynthesis.</text>
</comment>
<comment type="similarity">
    <text evidence="2">Belongs to the class I-like SAM-binding methyltransferase superfamily. TrmB family.</text>
</comment>
<dbReference type="EC" id="2.1.1.33" evidence="2"/>
<dbReference type="EMBL" id="CP001184">
    <property type="protein sequence ID" value="ACI60254.1"/>
    <property type="molecule type" value="Genomic_DNA"/>
</dbReference>
<dbReference type="RefSeq" id="WP_012560324.1">
    <property type="nucleotide sequence ID" value="NC_011374.1"/>
</dbReference>
<dbReference type="SMR" id="B5ZB79"/>
<dbReference type="STRING" id="565575.UUR10_0265"/>
<dbReference type="KEGG" id="uue:UUR10_0265"/>
<dbReference type="eggNOG" id="COG0220">
    <property type="taxonomic scope" value="Bacteria"/>
</dbReference>
<dbReference type="HOGENOM" id="CLU_050910_2_1_14"/>
<dbReference type="OrthoDB" id="9802090at2"/>
<dbReference type="UniPathway" id="UPA00989"/>
<dbReference type="Proteomes" id="UP000002018">
    <property type="component" value="Chromosome"/>
</dbReference>
<dbReference type="GO" id="GO:0043527">
    <property type="term" value="C:tRNA methyltransferase complex"/>
    <property type="evidence" value="ECO:0007669"/>
    <property type="project" value="TreeGrafter"/>
</dbReference>
<dbReference type="GO" id="GO:0008176">
    <property type="term" value="F:tRNA (guanine(46)-N7)-methyltransferase activity"/>
    <property type="evidence" value="ECO:0007669"/>
    <property type="project" value="UniProtKB-UniRule"/>
</dbReference>
<dbReference type="Gene3D" id="3.40.50.150">
    <property type="entry name" value="Vaccinia Virus protein VP39"/>
    <property type="match status" value="1"/>
</dbReference>
<dbReference type="HAMAP" id="MF_01057">
    <property type="entry name" value="tRNA_methyltr_TrmB"/>
    <property type="match status" value="1"/>
</dbReference>
<dbReference type="InterPro" id="IPR029063">
    <property type="entry name" value="SAM-dependent_MTases_sf"/>
</dbReference>
<dbReference type="InterPro" id="IPR003358">
    <property type="entry name" value="tRNA_(Gua-N-7)_MeTrfase_Trmb"/>
</dbReference>
<dbReference type="InterPro" id="IPR055361">
    <property type="entry name" value="tRNA_methyltr_TrmB_bact"/>
</dbReference>
<dbReference type="NCBIfam" id="NF001080">
    <property type="entry name" value="PRK00121.2-2"/>
    <property type="match status" value="1"/>
</dbReference>
<dbReference type="NCBIfam" id="TIGR00091">
    <property type="entry name" value="tRNA (guanosine(46)-N7)-methyltransferase TrmB"/>
    <property type="match status" value="1"/>
</dbReference>
<dbReference type="PANTHER" id="PTHR23417">
    <property type="entry name" value="3-DEOXY-D-MANNO-OCTULOSONIC-ACID TRANSFERASE/TRNA GUANINE-N 7 - -METHYLTRANSFERASE"/>
    <property type="match status" value="1"/>
</dbReference>
<dbReference type="PANTHER" id="PTHR23417:SF14">
    <property type="entry name" value="PENTACOTRIPEPTIDE-REPEAT REGION OF PRORP DOMAIN-CONTAINING PROTEIN"/>
    <property type="match status" value="1"/>
</dbReference>
<dbReference type="Pfam" id="PF02390">
    <property type="entry name" value="Methyltransf_4"/>
    <property type="match status" value="1"/>
</dbReference>
<dbReference type="SUPFAM" id="SSF53335">
    <property type="entry name" value="S-adenosyl-L-methionine-dependent methyltransferases"/>
    <property type="match status" value="1"/>
</dbReference>
<dbReference type="PROSITE" id="PS51625">
    <property type="entry name" value="SAM_MT_TRMB"/>
    <property type="match status" value="1"/>
</dbReference>
<reference key="1">
    <citation type="submission" date="2008-10" db="EMBL/GenBank/DDBJ databases">
        <title>Genome sequence of Ureaplasma urealyticum serovar 10 ATCC-33699.</title>
        <authorList>
            <person name="Shrivastava S."/>
            <person name="Methe B.A."/>
            <person name="Glass J."/>
            <person name="White K."/>
            <person name="Duffy L.B."/>
        </authorList>
    </citation>
    <scope>NUCLEOTIDE SEQUENCE [LARGE SCALE GENOMIC DNA]</scope>
    <source>
        <strain>ATCC 33699 / Western</strain>
    </source>
</reference>
<accession>B5ZB79</accession>
<feature type="chain" id="PRO_1000136374" description="tRNA (guanine-N(7)-)-methyltransferase">
    <location>
        <begin position="1"/>
        <end position="224"/>
    </location>
</feature>
<feature type="active site" evidence="1">
    <location>
        <position position="119"/>
    </location>
</feature>
<feature type="binding site" evidence="2">
    <location>
        <position position="45"/>
    </location>
    <ligand>
        <name>S-adenosyl-L-methionine</name>
        <dbReference type="ChEBI" id="CHEBI:59789"/>
    </ligand>
</feature>
<feature type="binding site" evidence="2">
    <location>
        <position position="70"/>
    </location>
    <ligand>
        <name>S-adenosyl-L-methionine</name>
        <dbReference type="ChEBI" id="CHEBI:59789"/>
    </ligand>
</feature>
<feature type="binding site" evidence="2">
    <location>
        <position position="97"/>
    </location>
    <ligand>
        <name>S-adenosyl-L-methionine</name>
        <dbReference type="ChEBI" id="CHEBI:59789"/>
    </ligand>
</feature>
<feature type="binding site" evidence="2">
    <location>
        <position position="119"/>
    </location>
    <ligand>
        <name>S-adenosyl-L-methionine</name>
        <dbReference type="ChEBI" id="CHEBI:59789"/>
    </ligand>
</feature>
<feature type="binding site" evidence="2">
    <location>
        <position position="123"/>
    </location>
    <ligand>
        <name>substrate</name>
    </ligand>
</feature>
<feature type="binding site" evidence="2">
    <location>
        <position position="155"/>
    </location>
    <ligand>
        <name>substrate</name>
    </ligand>
</feature>
<feature type="binding site" evidence="2">
    <location>
        <begin position="199"/>
        <end position="202"/>
    </location>
    <ligand>
        <name>substrate</name>
    </ligand>
</feature>
<sequence length="224" mass="26258">MRLRNNANAPLYLKSQEQYIVNDQQLLKNDLAKVFKNPHLPLHIEIGMGKGDFIVENALHNPQINYLGIEKFPTVIVKAHKKALKHKLDNLAMICFDANAILDLLNSKSIDKIYLNFSDPWPKKRHAKKRLTNPYFLEKFAALLKDDGLIEFKTDNESLFHYTIYDVLLNDLTKYEILFLTYNLYALVNNVELLKNIPTEYEKKFVMQGQRIKKVSFRFLKKND</sequence>
<organism>
    <name type="scientific">Ureaplasma urealyticum serovar 10 (strain ATCC 33699 / Western)</name>
    <dbReference type="NCBI Taxonomy" id="565575"/>
    <lineage>
        <taxon>Bacteria</taxon>
        <taxon>Bacillati</taxon>
        <taxon>Mycoplasmatota</taxon>
        <taxon>Mycoplasmoidales</taxon>
        <taxon>Mycoplasmoidaceae</taxon>
        <taxon>Ureaplasma</taxon>
    </lineage>
</organism>
<name>TRMB_UREU1</name>
<evidence type="ECO:0000250" key="1"/>
<evidence type="ECO:0000255" key="2">
    <source>
        <dbReference type="HAMAP-Rule" id="MF_01057"/>
    </source>
</evidence>
<protein>
    <recommendedName>
        <fullName evidence="2">tRNA (guanine-N(7)-)-methyltransferase</fullName>
        <ecNumber evidence="2">2.1.1.33</ecNumber>
    </recommendedName>
    <alternativeName>
        <fullName evidence="2">tRNA (guanine(46)-N(7))-methyltransferase</fullName>
    </alternativeName>
    <alternativeName>
        <fullName evidence="2">tRNA(m7G46)-methyltransferase</fullName>
    </alternativeName>
</protein>
<keyword id="KW-0489">Methyltransferase</keyword>
<keyword id="KW-0949">S-adenosyl-L-methionine</keyword>
<keyword id="KW-0808">Transferase</keyword>
<keyword id="KW-0819">tRNA processing</keyword>
<proteinExistence type="inferred from homology"/>